<name>RL22_LISMH</name>
<organism>
    <name type="scientific">Listeria monocytogenes serotype 4a (strain HCC23)</name>
    <dbReference type="NCBI Taxonomy" id="552536"/>
    <lineage>
        <taxon>Bacteria</taxon>
        <taxon>Bacillati</taxon>
        <taxon>Bacillota</taxon>
        <taxon>Bacilli</taxon>
        <taxon>Bacillales</taxon>
        <taxon>Listeriaceae</taxon>
        <taxon>Listeria</taxon>
    </lineage>
</organism>
<gene>
    <name evidence="1" type="primary">rplV</name>
    <name type="ordered locus">LMHCC_2907</name>
</gene>
<sequence length="118" mass="12874">MASEVTSAKAVAKTVRIAPRKARIVIDLIRGKQVGEAIAILKYTPRSASPIIEKVLKSAIANAEHNYDLDINNLVVEEAFVDEGPTLKRFRPRAQGRASAINKRTSHITVVVSEVKEG</sequence>
<dbReference type="EMBL" id="CP001175">
    <property type="protein sequence ID" value="ACK41238.1"/>
    <property type="molecule type" value="Genomic_DNA"/>
</dbReference>
<dbReference type="RefSeq" id="WP_003727697.1">
    <property type="nucleotide sequence ID" value="NC_011660.1"/>
</dbReference>
<dbReference type="SMR" id="B8DB13"/>
<dbReference type="GeneID" id="93240508"/>
<dbReference type="KEGG" id="lmh:LMHCC_2907"/>
<dbReference type="HOGENOM" id="CLU_083987_3_3_9"/>
<dbReference type="GO" id="GO:0022625">
    <property type="term" value="C:cytosolic large ribosomal subunit"/>
    <property type="evidence" value="ECO:0007669"/>
    <property type="project" value="TreeGrafter"/>
</dbReference>
<dbReference type="GO" id="GO:0019843">
    <property type="term" value="F:rRNA binding"/>
    <property type="evidence" value="ECO:0007669"/>
    <property type="project" value="UniProtKB-UniRule"/>
</dbReference>
<dbReference type="GO" id="GO:0003735">
    <property type="term" value="F:structural constituent of ribosome"/>
    <property type="evidence" value="ECO:0007669"/>
    <property type="project" value="InterPro"/>
</dbReference>
<dbReference type="GO" id="GO:0006412">
    <property type="term" value="P:translation"/>
    <property type="evidence" value="ECO:0007669"/>
    <property type="project" value="UniProtKB-UniRule"/>
</dbReference>
<dbReference type="CDD" id="cd00336">
    <property type="entry name" value="Ribosomal_L22"/>
    <property type="match status" value="1"/>
</dbReference>
<dbReference type="FunFam" id="3.90.470.10:FF:000001">
    <property type="entry name" value="50S ribosomal protein L22"/>
    <property type="match status" value="1"/>
</dbReference>
<dbReference type="Gene3D" id="3.90.470.10">
    <property type="entry name" value="Ribosomal protein L22/L17"/>
    <property type="match status" value="1"/>
</dbReference>
<dbReference type="HAMAP" id="MF_01331_B">
    <property type="entry name" value="Ribosomal_uL22_B"/>
    <property type="match status" value="1"/>
</dbReference>
<dbReference type="InterPro" id="IPR001063">
    <property type="entry name" value="Ribosomal_uL22"/>
</dbReference>
<dbReference type="InterPro" id="IPR005727">
    <property type="entry name" value="Ribosomal_uL22_bac/chlpt-type"/>
</dbReference>
<dbReference type="InterPro" id="IPR047867">
    <property type="entry name" value="Ribosomal_uL22_bac/org-type"/>
</dbReference>
<dbReference type="InterPro" id="IPR018260">
    <property type="entry name" value="Ribosomal_uL22_CS"/>
</dbReference>
<dbReference type="InterPro" id="IPR036394">
    <property type="entry name" value="Ribosomal_uL22_sf"/>
</dbReference>
<dbReference type="NCBIfam" id="TIGR01044">
    <property type="entry name" value="rplV_bact"/>
    <property type="match status" value="1"/>
</dbReference>
<dbReference type="PANTHER" id="PTHR13501">
    <property type="entry name" value="CHLOROPLAST 50S RIBOSOMAL PROTEIN L22-RELATED"/>
    <property type="match status" value="1"/>
</dbReference>
<dbReference type="PANTHER" id="PTHR13501:SF8">
    <property type="entry name" value="LARGE RIBOSOMAL SUBUNIT PROTEIN UL22M"/>
    <property type="match status" value="1"/>
</dbReference>
<dbReference type="Pfam" id="PF00237">
    <property type="entry name" value="Ribosomal_L22"/>
    <property type="match status" value="1"/>
</dbReference>
<dbReference type="SUPFAM" id="SSF54843">
    <property type="entry name" value="Ribosomal protein L22"/>
    <property type="match status" value="1"/>
</dbReference>
<dbReference type="PROSITE" id="PS00464">
    <property type="entry name" value="RIBOSOMAL_L22"/>
    <property type="match status" value="1"/>
</dbReference>
<comment type="function">
    <text evidence="1">This protein binds specifically to 23S rRNA; its binding is stimulated by other ribosomal proteins, e.g. L4, L17, and L20. It is important during the early stages of 50S assembly. It makes multiple contacts with different domains of the 23S rRNA in the assembled 50S subunit and ribosome (By similarity).</text>
</comment>
<comment type="function">
    <text evidence="1">The globular domain of the protein is located near the polypeptide exit tunnel on the outside of the subunit, while an extended beta-hairpin is found that lines the wall of the exit tunnel in the center of the 70S ribosome.</text>
</comment>
<comment type="subunit">
    <text evidence="1">Part of the 50S ribosomal subunit.</text>
</comment>
<comment type="similarity">
    <text evidence="1">Belongs to the universal ribosomal protein uL22 family.</text>
</comment>
<proteinExistence type="inferred from homology"/>
<accession>B8DB13</accession>
<keyword id="KW-0687">Ribonucleoprotein</keyword>
<keyword id="KW-0689">Ribosomal protein</keyword>
<keyword id="KW-0694">RNA-binding</keyword>
<keyword id="KW-0699">rRNA-binding</keyword>
<reference key="1">
    <citation type="journal article" date="2011" name="J. Bacteriol.">
        <title>Genome sequence of lineage III Listeria monocytogenes strain HCC23.</title>
        <authorList>
            <person name="Steele C.L."/>
            <person name="Donaldson J.R."/>
            <person name="Paul D."/>
            <person name="Banes M.M."/>
            <person name="Arick T."/>
            <person name="Bridges S.M."/>
            <person name="Lawrence M.L."/>
        </authorList>
    </citation>
    <scope>NUCLEOTIDE SEQUENCE [LARGE SCALE GENOMIC DNA]</scope>
    <source>
        <strain>HCC23</strain>
    </source>
</reference>
<evidence type="ECO:0000255" key="1">
    <source>
        <dbReference type="HAMAP-Rule" id="MF_01331"/>
    </source>
</evidence>
<evidence type="ECO:0000305" key="2"/>
<protein>
    <recommendedName>
        <fullName evidence="1">Large ribosomal subunit protein uL22</fullName>
    </recommendedName>
    <alternativeName>
        <fullName evidence="2">50S ribosomal protein L22</fullName>
    </alternativeName>
</protein>
<feature type="chain" id="PRO_1000166068" description="Large ribosomal subunit protein uL22">
    <location>
        <begin position="1"/>
        <end position="118"/>
    </location>
</feature>